<name>Y2527_CITK8</name>
<dbReference type="EMBL" id="CP000822">
    <property type="protein sequence ID" value="ABV13636.1"/>
    <property type="molecule type" value="Genomic_DNA"/>
</dbReference>
<dbReference type="BMRB" id="A8AJH3"/>
<dbReference type="SMR" id="A8AJH3"/>
<dbReference type="STRING" id="290338.CKO_02527"/>
<dbReference type="KEGG" id="cko:CKO_02527"/>
<dbReference type="HOGENOM" id="CLU_161438_2_1_6"/>
<dbReference type="OrthoDB" id="9793424at2"/>
<dbReference type="Proteomes" id="UP000008148">
    <property type="component" value="Chromosome"/>
</dbReference>
<dbReference type="GO" id="GO:0005829">
    <property type="term" value="C:cytosol"/>
    <property type="evidence" value="ECO:0007669"/>
    <property type="project" value="TreeGrafter"/>
</dbReference>
<dbReference type="FunFam" id="3.30.70.260:FF:000002">
    <property type="entry name" value="UPF0250 protein YbeD"/>
    <property type="match status" value="1"/>
</dbReference>
<dbReference type="Gene3D" id="3.30.70.260">
    <property type="match status" value="1"/>
</dbReference>
<dbReference type="HAMAP" id="MF_00659">
    <property type="entry name" value="UPF0250"/>
    <property type="match status" value="1"/>
</dbReference>
<dbReference type="InterPro" id="IPR007454">
    <property type="entry name" value="UPF0250_YbeD-like"/>
</dbReference>
<dbReference type="InterPro" id="IPR027471">
    <property type="entry name" value="YbeD-like_sf"/>
</dbReference>
<dbReference type="NCBIfam" id="NF003447">
    <property type="entry name" value="PRK04998.1"/>
    <property type="match status" value="1"/>
</dbReference>
<dbReference type="PANTHER" id="PTHR38036">
    <property type="entry name" value="UPF0250 PROTEIN YBED"/>
    <property type="match status" value="1"/>
</dbReference>
<dbReference type="PANTHER" id="PTHR38036:SF1">
    <property type="entry name" value="UPF0250 PROTEIN YBED"/>
    <property type="match status" value="1"/>
</dbReference>
<dbReference type="Pfam" id="PF04359">
    <property type="entry name" value="DUF493"/>
    <property type="match status" value="1"/>
</dbReference>
<dbReference type="SUPFAM" id="SSF117991">
    <property type="entry name" value="YbeD/HP0495-like"/>
    <property type="match status" value="1"/>
</dbReference>
<organism>
    <name type="scientific">Citrobacter koseri (strain ATCC BAA-895 / CDC 4225-83 / SGSC4696)</name>
    <dbReference type="NCBI Taxonomy" id="290338"/>
    <lineage>
        <taxon>Bacteria</taxon>
        <taxon>Pseudomonadati</taxon>
        <taxon>Pseudomonadota</taxon>
        <taxon>Gammaproteobacteria</taxon>
        <taxon>Enterobacterales</taxon>
        <taxon>Enterobacteriaceae</taxon>
        <taxon>Citrobacter</taxon>
    </lineage>
</organism>
<evidence type="ECO:0000255" key="1">
    <source>
        <dbReference type="HAMAP-Rule" id="MF_00659"/>
    </source>
</evidence>
<reference key="1">
    <citation type="submission" date="2007-08" db="EMBL/GenBank/DDBJ databases">
        <authorList>
            <consortium name="The Citrobacter koseri Genome Sequencing Project"/>
            <person name="McClelland M."/>
            <person name="Sanderson E.K."/>
            <person name="Porwollik S."/>
            <person name="Spieth J."/>
            <person name="Clifton W.S."/>
            <person name="Latreille P."/>
            <person name="Courtney L."/>
            <person name="Wang C."/>
            <person name="Pepin K."/>
            <person name="Bhonagiri V."/>
            <person name="Nash W."/>
            <person name="Johnson M."/>
            <person name="Thiruvilangam P."/>
            <person name="Wilson R."/>
        </authorList>
    </citation>
    <scope>NUCLEOTIDE SEQUENCE [LARGE SCALE GENOMIC DNA]</scope>
    <source>
        <strain>ATCC BAA-895 / CDC 4225-83 / SGSC4696</strain>
    </source>
</reference>
<keyword id="KW-1185">Reference proteome</keyword>
<sequence>MKTKLNELLEFPTPFTYKVMGQALPELVDQVVEVVQRHAPGDYSPTVKPSSKGNYHSVSITINATHIEQVETLYEELGNIDIVRMVL</sequence>
<accession>A8AJH3</accession>
<comment type="similarity">
    <text evidence="1">Belongs to the UPF0250 family.</text>
</comment>
<protein>
    <recommendedName>
        <fullName evidence="1">UPF0250 protein CKO_02527</fullName>
    </recommendedName>
</protein>
<feature type="chain" id="PRO_1000061860" description="UPF0250 protein CKO_02527">
    <location>
        <begin position="1"/>
        <end position="87"/>
    </location>
</feature>
<proteinExistence type="inferred from homology"/>
<gene>
    <name type="ordered locus">CKO_02527</name>
</gene>